<evidence type="ECO:0000255" key="1">
    <source>
        <dbReference type="HAMAP-Rule" id="MF_01328"/>
    </source>
</evidence>
<evidence type="ECO:0000256" key="2">
    <source>
        <dbReference type="SAM" id="MobiDB-lite"/>
    </source>
</evidence>
<evidence type="ECO:0000305" key="3"/>
<sequence length="215" mass="24100">MSKAIVLDSHLKEKGSMELPKRYEGINSHNLYLYVKHYLSSVRANTAKSKNRAEVSGGGRKPWAQKGGGRARAGSITSPVFVGGGVSHGATNNRNYNLKINKKQKRLALEYALEEKAQANKLFVVEKIAIKGVVEYNKRKHLAKEANKMFQALEQRDTLFVCMNMDEYTELAFSNLKKCLVIDVSELNAYLLAAFSSVVMEEVAFQHVVQDKTEE</sequence>
<feature type="chain" id="PRO_1000052414" description="Large ribosomal subunit protein uL4">
    <location>
        <begin position="1"/>
        <end position="215"/>
    </location>
</feature>
<feature type="region of interest" description="Disordered" evidence="2">
    <location>
        <begin position="46"/>
        <end position="76"/>
    </location>
</feature>
<feature type="compositionally biased region" description="Gly residues" evidence="2">
    <location>
        <begin position="56"/>
        <end position="71"/>
    </location>
</feature>
<comment type="function">
    <text evidence="1">One of the primary rRNA binding proteins, this protein initially binds near the 5'-end of the 23S rRNA. It is important during the early stages of 50S assembly. It makes multiple contacts with different domains of the 23S rRNA in the assembled 50S subunit and ribosome.</text>
</comment>
<comment type="function">
    <text evidence="1">Forms part of the polypeptide exit tunnel.</text>
</comment>
<comment type="subunit">
    <text evidence="1">Part of the 50S ribosomal subunit.</text>
</comment>
<comment type="similarity">
    <text evidence="1">Belongs to the universal ribosomal protein uL4 family.</text>
</comment>
<dbReference type="EMBL" id="AM260522">
    <property type="protein sequence ID" value="CAJ98989.1"/>
    <property type="molecule type" value="Genomic_DNA"/>
</dbReference>
<dbReference type="RefSeq" id="WP_011577109.1">
    <property type="nucleotide sequence ID" value="NC_008229.1"/>
</dbReference>
<dbReference type="SMR" id="Q17ZD7"/>
<dbReference type="STRING" id="382638.Hac_0137"/>
<dbReference type="GeneID" id="31757666"/>
<dbReference type="KEGG" id="hac:Hac_0137"/>
<dbReference type="eggNOG" id="COG0088">
    <property type="taxonomic scope" value="Bacteria"/>
</dbReference>
<dbReference type="HOGENOM" id="CLU_041575_5_2_7"/>
<dbReference type="OrthoDB" id="9803201at2"/>
<dbReference type="BioCyc" id="HACI382638:HAC_RS00585-MONOMER"/>
<dbReference type="Proteomes" id="UP000000775">
    <property type="component" value="Chromosome"/>
</dbReference>
<dbReference type="GO" id="GO:1990904">
    <property type="term" value="C:ribonucleoprotein complex"/>
    <property type="evidence" value="ECO:0007669"/>
    <property type="project" value="UniProtKB-KW"/>
</dbReference>
<dbReference type="GO" id="GO:0005840">
    <property type="term" value="C:ribosome"/>
    <property type="evidence" value="ECO:0007669"/>
    <property type="project" value="UniProtKB-KW"/>
</dbReference>
<dbReference type="GO" id="GO:0019843">
    <property type="term" value="F:rRNA binding"/>
    <property type="evidence" value="ECO:0007669"/>
    <property type="project" value="UniProtKB-UniRule"/>
</dbReference>
<dbReference type="GO" id="GO:0003735">
    <property type="term" value="F:structural constituent of ribosome"/>
    <property type="evidence" value="ECO:0007669"/>
    <property type="project" value="InterPro"/>
</dbReference>
<dbReference type="GO" id="GO:0006412">
    <property type="term" value="P:translation"/>
    <property type="evidence" value="ECO:0007669"/>
    <property type="project" value="UniProtKB-UniRule"/>
</dbReference>
<dbReference type="FunFam" id="3.40.1370.10:FF:000008">
    <property type="entry name" value="50S ribosomal protein L4"/>
    <property type="match status" value="1"/>
</dbReference>
<dbReference type="Gene3D" id="3.40.1370.10">
    <property type="match status" value="1"/>
</dbReference>
<dbReference type="HAMAP" id="MF_01328_B">
    <property type="entry name" value="Ribosomal_uL4_B"/>
    <property type="match status" value="1"/>
</dbReference>
<dbReference type="InterPro" id="IPR002136">
    <property type="entry name" value="Ribosomal_uL4"/>
</dbReference>
<dbReference type="InterPro" id="IPR013005">
    <property type="entry name" value="Ribosomal_uL4-like"/>
</dbReference>
<dbReference type="InterPro" id="IPR023574">
    <property type="entry name" value="Ribosomal_uL4_dom_sf"/>
</dbReference>
<dbReference type="NCBIfam" id="TIGR03953">
    <property type="entry name" value="rplD_bact"/>
    <property type="match status" value="1"/>
</dbReference>
<dbReference type="PANTHER" id="PTHR10746">
    <property type="entry name" value="50S RIBOSOMAL PROTEIN L4"/>
    <property type="match status" value="1"/>
</dbReference>
<dbReference type="PANTHER" id="PTHR10746:SF6">
    <property type="entry name" value="LARGE RIBOSOMAL SUBUNIT PROTEIN UL4M"/>
    <property type="match status" value="1"/>
</dbReference>
<dbReference type="Pfam" id="PF00573">
    <property type="entry name" value="Ribosomal_L4"/>
    <property type="match status" value="1"/>
</dbReference>
<dbReference type="SUPFAM" id="SSF52166">
    <property type="entry name" value="Ribosomal protein L4"/>
    <property type="match status" value="1"/>
</dbReference>
<organism>
    <name type="scientific">Helicobacter acinonychis (strain Sheeba)</name>
    <dbReference type="NCBI Taxonomy" id="382638"/>
    <lineage>
        <taxon>Bacteria</taxon>
        <taxon>Pseudomonadati</taxon>
        <taxon>Campylobacterota</taxon>
        <taxon>Epsilonproteobacteria</taxon>
        <taxon>Campylobacterales</taxon>
        <taxon>Helicobacteraceae</taxon>
        <taxon>Helicobacter</taxon>
    </lineage>
</organism>
<name>RL4_HELAH</name>
<protein>
    <recommendedName>
        <fullName evidence="1">Large ribosomal subunit protein uL4</fullName>
    </recommendedName>
    <alternativeName>
        <fullName evidence="3">50S ribosomal protein L4</fullName>
    </alternativeName>
</protein>
<accession>Q17ZD7</accession>
<keyword id="KW-0687">Ribonucleoprotein</keyword>
<keyword id="KW-0689">Ribosomal protein</keyword>
<keyword id="KW-0694">RNA-binding</keyword>
<keyword id="KW-0699">rRNA-binding</keyword>
<proteinExistence type="inferred from homology"/>
<gene>
    <name evidence="1" type="primary">rplD</name>
    <name type="ordered locus">Hac_0137</name>
</gene>
<reference key="1">
    <citation type="journal article" date="2006" name="PLoS Genet.">
        <title>Who ate whom? Adaptive Helicobacter genomic changes that accompanied a host jump from early humans to large felines.</title>
        <authorList>
            <person name="Eppinger M."/>
            <person name="Baar C."/>
            <person name="Linz B."/>
            <person name="Raddatz G."/>
            <person name="Lanz C."/>
            <person name="Keller H."/>
            <person name="Morelli G."/>
            <person name="Gressmann H."/>
            <person name="Achtman M."/>
            <person name="Schuster S.C."/>
        </authorList>
    </citation>
    <scope>NUCLEOTIDE SEQUENCE [LARGE SCALE GENOMIC DNA]</scope>
    <source>
        <strain>Sheeba</strain>
    </source>
</reference>